<organism>
    <name type="scientific">Mycoplasma pneumoniae (strain ATCC 29342 / M129 / Subtype 1)</name>
    <name type="common">Mycoplasmoides pneumoniae</name>
    <dbReference type="NCBI Taxonomy" id="272634"/>
    <lineage>
        <taxon>Bacteria</taxon>
        <taxon>Bacillati</taxon>
        <taxon>Mycoplasmatota</taxon>
        <taxon>Mycoplasmoidales</taxon>
        <taxon>Mycoplasmoidaceae</taxon>
        <taxon>Mycoplasmoides</taxon>
    </lineage>
</organism>
<name>Y099_MYCPN</name>
<keyword id="KW-1185">Reference proteome</keyword>
<reference key="1">
    <citation type="journal article" date="1996" name="Nucleic Acids Res.">
        <title>Complete sequence analysis of the genome of the bacterium Mycoplasma pneumoniae.</title>
        <authorList>
            <person name="Himmelreich R."/>
            <person name="Hilbert H."/>
            <person name="Plagens H."/>
            <person name="Pirkl E."/>
            <person name="Li B.-C."/>
            <person name="Herrmann R."/>
        </authorList>
    </citation>
    <scope>NUCLEOTIDE SEQUENCE [LARGE SCALE GENOMIC DNA]</scope>
    <source>
        <strain>ATCC 29342 / M129 / Subtype 1</strain>
    </source>
</reference>
<proteinExistence type="uncertain"/>
<evidence type="ECO:0000256" key="1">
    <source>
        <dbReference type="SAM" id="MobiDB-lite"/>
    </source>
</evidence>
<evidence type="ECO:0000305" key="2"/>
<gene>
    <name type="ordered locus">MPN_099</name>
    <name type="ORF">MP055</name>
    <name type="ORF">R02_orf347L</name>
</gene>
<protein>
    <recommendedName>
        <fullName>Putative adhesin P1-like protein MPN_099</fullName>
    </recommendedName>
</protein>
<comment type="similarity">
    <text evidence="2">Belongs to the adhesin P1 family.</text>
</comment>
<comment type="caution">
    <text evidence="2">Could be the product of a pseudogene.</text>
</comment>
<sequence length="347" mass="37101">MLGSIPVLVNRSGSDSNKFQATDQKWSYTDLQSDQTKLNLSAYGEVNGLLNPALVETYFGTTRTSSTANQNSTTVPGIGFKIPEQNNDSKATLITPGLAWTPQDVGNLVVSGTTVSFQLGGWLVTFTDFVKPRAGYLGLQLSGLNASDSDQRELIWAPRPWAAFRGSWVNRLGRVESVWDLKGVWADQAQLAAQAATSSTTTTATGATLPEHPNALAYQISYTDKDSYKASTQGSGQTNSQNNSLYLHLIKPKKVESTTQLDQGLKNLLDPNQVRTKLRQSFGTDHSTQPQPQSLKTTTPVFGAMSGNLGSVLSGGGAGGAGSTNSVDLSPVERVSGSLTINRNFSY</sequence>
<feature type="chain" id="PRO_0000210706" description="Putative adhesin P1-like protein MPN_099">
    <location>
        <begin position="1"/>
        <end position="347"/>
    </location>
</feature>
<feature type="region of interest" description="Disordered" evidence="1">
    <location>
        <begin position="282"/>
        <end position="302"/>
    </location>
</feature>
<feature type="compositionally biased region" description="Polar residues" evidence="1">
    <location>
        <begin position="282"/>
        <end position="300"/>
    </location>
</feature>
<dbReference type="EMBL" id="U00089">
    <property type="protein sequence ID" value="AAB95703.1"/>
    <property type="molecule type" value="Genomic_DNA"/>
</dbReference>
<dbReference type="PIR" id="S73381">
    <property type="entry name" value="S73381"/>
</dbReference>
<dbReference type="SMR" id="P75593"/>
<dbReference type="IntAct" id="P75593">
    <property type="interactions" value="1"/>
</dbReference>
<dbReference type="EnsemblBacteria" id="AAB95703">
    <property type="protein sequence ID" value="AAB95703"/>
    <property type="gene ID" value="MPN_099"/>
</dbReference>
<dbReference type="KEGG" id="mpn:MPN_099"/>
<dbReference type="HOGENOM" id="CLU_022417_0_0_14"/>
<dbReference type="Proteomes" id="UP000000808">
    <property type="component" value="Chromosome"/>
</dbReference>
<dbReference type="InterPro" id="IPR004940">
    <property type="entry name" value="Adhesin_P1_C"/>
</dbReference>
<dbReference type="Pfam" id="PF03257">
    <property type="entry name" value="Adhesin_P1_C"/>
    <property type="match status" value="1"/>
</dbReference>
<accession>P75593</accession>